<protein>
    <recommendedName>
        <fullName evidence="1">Sec-independent protein translocase protein TatB</fullName>
    </recommendedName>
</protein>
<dbReference type="EMBL" id="CP000611">
    <property type="protein sequence ID" value="ABQ72972.1"/>
    <property type="molecule type" value="Genomic_DNA"/>
</dbReference>
<dbReference type="RefSeq" id="WP_003898780.1">
    <property type="nucleotide sequence ID" value="NZ_CP016972.1"/>
</dbReference>
<dbReference type="SMR" id="A5U1S2"/>
<dbReference type="KEGG" id="mra:MRA_1233"/>
<dbReference type="eggNOG" id="COG1826">
    <property type="taxonomic scope" value="Bacteria"/>
</dbReference>
<dbReference type="HOGENOM" id="CLU_086034_2_0_11"/>
<dbReference type="Proteomes" id="UP000001988">
    <property type="component" value="Chromosome"/>
</dbReference>
<dbReference type="GO" id="GO:0033281">
    <property type="term" value="C:TAT protein transport complex"/>
    <property type="evidence" value="ECO:0007669"/>
    <property type="project" value="UniProtKB-UniRule"/>
</dbReference>
<dbReference type="GO" id="GO:0008320">
    <property type="term" value="F:protein transmembrane transporter activity"/>
    <property type="evidence" value="ECO:0007669"/>
    <property type="project" value="UniProtKB-UniRule"/>
</dbReference>
<dbReference type="GO" id="GO:0043953">
    <property type="term" value="P:protein transport by the Tat complex"/>
    <property type="evidence" value="ECO:0007669"/>
    <property type="project" value="UniProtKB-UniRule"/>
</dbReference>
<dbReference type="Gene3D" id="1.20.5.3310">
    <property type="match status" value="1"/>
</dbReference>
<dbReference type="HAMAP" id="MF_00237">
    <property type="entry name" value="TatB"/>
    <property type="match status" value="1"/>
</dbReference>
<dbReference type="InterPro" id="IPR003369">
    <property type="entry name" value="TatA/B/E"/>
</dbReference>
<dbReference type="InterPro" id="IPR018448">
    <property type="entry name" value="TatB"/>
</dbReference>
<dbReference type="NCBIfam" id="TIGR01410">
    <property type="entry name" value="tatB"/>
    <property type="match status" value="1"/>
</dbReference>
<dbReference type="Pfam" id="PF02416">
    <property type="entry name" value="TatA_B_E"/>
    <property type="match status" value="1"/>
</dbReference>
<dbReference type="PRINTS" id="PR01506">
    <property type="entry name" value="TATBPROTEIN"/>
</dbReference>
<accession>A5U1S2</accession>
<gene>
    <name evidence="1" type="primary">tatB</name>
    <name type="ordered locus">MRA_1233</name>
</gene>
<proteinExistence type="inferred from homology"/>
<name>TATB_MYCTA</name>
<comment type="function">
    <text evidence="1">Part of the twin-arginine translocation (Tat) system that transports large folded proteins containing a characteristic twin-arginine motif in their signal peptide across membranes. Together with TatC, TatB is part of a receptor directly interacting with Tat signal peptides. TatB may form an oligomeric binding site that transiently accommodates folded Tat precursor proteins before their translocation.</text>
</comment>
<comment type="subunit">
    <text evidence="1">The Tat system comprises two distinct complexes: a TatABC complex, containing multiple copies of TatA, TatB and TatC subunits, and a separate TatA complex, containing only TatA subunits. Substrates initially bind to the TatABC complex, which probably triggers association of the separate TatA complex to form the active translocon.</text>
</comment>
<comment type="subcellular location">
    <subcellularLocation>
        <location evidence="1">Cell membrane</location>
        <topology evidence="1">Single-pass membrane protein</topology>
    </subcellularLocation>
</comment>
<comment type="similarity">
    <text evidence="1">Belongs to the TatB family.</text>
</comment>
<sequence>MFANIGWWEMLVLVMVGLVVLGPERLPGAIRWAASALRQARDYLSGVTSQLREDIGPEFDDLRGHLGELQKLRGMTPRAALTKHLLDGDDSLFTGDFDRPTPKKPDAAGSAGPDATEQIGAGPIPFDSDAT</sequence>
<evidence type="ECO:0000255" key="1">
    <source>
        <dbReference type="HAMAP-Rule" id="MF_00237"/>
    </source>
</evidence>
<evidence type="ECO:0000256" key="2">
    <source>
        <dbReference type="SAM" id="MobiDB-lite"/>
    </source>
</evidence>
<feature type="chain" id="PRO_0000301192" description="Sec-independent protein translocase protein TatB">
    <location>
        <begin position="1"/>
        <end position="131"/>
    </location>
</feature>
<feature type="transmembrane region" description="Helical" evidence="1">
    <location>
        <begin position="2"/>
        <end position="22"/>
    </location>
</feature>
<feature type="region of interest" description="Disordered" evidence="2">
    <location>
        <begin position="90"/>
        <end position="131"/>
    </location>
</feature>
<feature type="compositionally biased region" description="Basic and acidic residues" evidence="2">
    <location>
        <begin position="96"/>
        <end position="106"/>
    </location>
</feature>
<organism>
    <name type="scientific">Mycobacterium tuberculosis (strain ATCC 25177 / H37Ra)</name>
    <dbReference type="NCBI Taxonomy" id="419947"/>
    <lineage>
        <taxon>Bacteria</taxon>
        <taxon>Bacillati</taxon>
        <taxon>Actinomycetota</taxon>
        <taxon>Actinomycetes</taxon>
        <taxon>Mycobacteriales</taxon>
        <taxon>Mycobacteriaceae</taxon>
        <taxon>Mycobacterium</taxon>
        <taxon>Mycobacterium tuberculosis complex</taxon>
    </lineage>
</organism>
<keyword id="KW-1003">Cell membrane</keyword>
<keyword id="KW-0472">Membrane</keyword>
<keyword id="KW-0653">Protein transport</keyword>
<keyword id="KW-1185">Reference proteome</keyword>
<keyword id="KW-0811">Translocation</keyword>
<keyword id="KW-0812">Transmembrane</keyword>
<keyword id="KW-1133">Transmembrane helix</keyword>
<keyword id="KW-0813">Transport</keyword>
<reference key="1">
    <citation type="journal article" date="2008" name="PLoS ONE">
        <title>Genetic basis of virulence attenuation revealed by comparative genomic analysis of Mycobacterium tuberculosis strain H37Ra versus H37Rv.</title>
        <authorList>
            <person name="Zheng H."/>
            <person name="Lu L."/>
            <person name="Wang B."/>
            <person name="Pu S."/>
            <person name="Zhang X."/>
            <person name="Zhu G."/>
            <person name="Shi W."/>
            <person name="Zhang L."/>
            <person name="Wang H."/>
            <person name="Wang S."/>
            <person name="Zhao G."/>
            <person name="Zhang Y."/>
        </authorList>
    </citation>
    <scope>NUCLEOTIDE SEQUENCE [LARGE SCALE GENOMIC DNA]</scope>
    <source>
        <strain>ATCC 25177 / H37Ra</strain>
    </source>
</reference>